<sequence>MEDFVRQCFNPMIVELAEKAMKEYGEDLKIETNKFAAICTHLEVCFMYSDFHFINEQGESIVVELDDPNALLKHRFEIIEGRDRTMAWTVVNSICNTTGAEKPKFLPDLYDYKENRFIEIGVTRREVHIYYLEKANKIKSENTHIHIFSFTGEEMATKADYTLDEESRARIKTRLFTIRQEMANRGLWDSFRQSERGEETIEERFEITGTMRRLADQSLPPNFSCLENFRAYVDGFEPNGCIEGKLSQMSKEVNAKIEPFLKTTPRPIKLPDGPPCFQRSKFLLMDALKLSIEDPSHEGEGIPLYDAIKCMRTFFGWKEPYIVKPHEKGINSNYLLSWKQVLAELQDIENEEKIPRTKNMKKTSQLKWALGENMAPEKVDFDNCRDISDLKQYDSDEPELRSLSSWIQNEFNKACELTDSIWIELDEIGEDVAPIEYIASMRRNYFTAEVSHCRATEYIMKGVYINTALLNASCAAMDDFQLIPMISKCRTKEGRRKTNLYGFIIKGRSHLRNDTDVVNFVSMEFSLTDPRFEPHKWEKYCVLEIGDMLLRSAIGQMSRPMFLYVRTNGTSKIKMKWGMEMRRCLLQSLQQIESMIEAESSVKEKDMTKEFFENKSETWPIGESPKGVEEGSIGKVCRTLLAKSVFNSLYASPQLEGFSAESRKLLLVVQALRDNLEPGTFDLGGLYEAIEECLINDPWVLLNASWFNSFLTHALR</sequence>
<gene>
    <name evidence="2" type="primary">PA</name>
</gene>
<proteinExistence type="inferred from homology"/>
<dbReference type="EC" id="3.1.-.-" evidence="2"/>
<dbReference type="EMBL" id="CY006696">
    <property type="protein sequence ID" value="ABB96326.1"/>
    <property type="molecule type" value="Genomic_RNA"/>
</dbReference>
<dbReference type="SMR" id="Q2VNE6"/>
<dbReference type="MEROPS" id="S62.001"/>
<dbReference type="Proteomes" id="UP000007555">
    <property type="component" value="Genome"/>
</dbReference>
<dbReference type="GO" id="GO:0030430">
    <property type="term" value="C:host cell cytoplasm"/>
    <property type="evidence" value="ECO:0007669"/>
    <property type="project" value="UniProtKB-SubCell"/>
</dbReference>
<dbReference type="GO" id="GO:0042025">
    <property type="term" value="C:host cell nucleus"/>
    <property type="evidence" value="ECO:0007669"/>
    <property type="project" value="UniProtKB-SubCell"/>
</dbReference>
<dbReference type="GO" id="GO:0004519">
    <property type="term" value="F:endonuclease activity"/>
    <property type="evidence" value="ECO:0007669"/>
    <property type="project" value="UniProtKB-KW"/>
</dbReference>
<dbReference type="GO" id="GO:0046872">
    <property type="term" value="F:metal ion binding"/>
    <property type="evidence" value="ECO:0007669"/>
    <property type="project" value="UniProtKB-KW"/>
</dbReference>
<dbReference type="GO" id="GO:0003723">
    <property type="term" value="F:RNA binding"/>
    <property type="evidence" value="ECO:0007669"/>
    <property type="project" value="UniProtKB-UniRule"/>
</dbReference>
<dbReference type="GO" id="GO:0075526">
    <property type="term" value="P:cap snatching"/>
    <property type="evidence" value="ECO:0007669"/>
    <property type="project" value="UniProtKB-UniRule"/>
</dbReference>
<dbReference type="GO" id="GO:0006351">
    <property type="term" value="P:DNA-templated transcription"/>
    <property type="evidence" value="ECO:0007669"/>
    <property type="project" value="UniProtKB-UniRule"/>
</dbReference>
<dbReference type="GO" id="GO:0039657">
    <property type="term" value="P:symbiont-mediated suppression of host gene expression"/>
    <property type="evidence" value="ECO:0007669"/>
    <property type="project" value="UniProtKB-KW"/>
</dbReference>
<dbReference type="GO" id="GO:0039523">
    <property type="term" value="P:symbiont-mediated suppression of host mRNA transcription via inhibition of RNA polymerase II activity"/>
    <property type="evidence" value="ECO:0007669"/>
    <property type="project" value="UniProtKB-UniRule"/>
</dbReference>
<dbReference type="GO" id="GO:0039694">
    <property type="term" value="P:viral RNA genome replication"/>
    <property type="evidence" value="ECO:0007669"/>
    <property type="project" value="InterPro"/>
</dbReference>
<dbReference type="GO" id="GO:0075523">
    <property type="term" value="P:viral translational frameshifting"/>
    <property type="evidence" value="ECO:0007669"/>
    <property type="project" value="UniProtKB-KW"/>
</dbReference>
<dbReference type="FunFam" id="3.40.91.90:FF:000001">
    <property type="entry name" value="Polymerase acidic protein"/>
    <property type="match status" value="1"/>
</dbReference>
<dbReference type="Gene3D" id="3.40.91.90">
    <property type="entry name" value="Influenza RNA-dependent RNA polymerase subunit PA, endonuclease domain"/>
    <property type="match status" value="1"/>
</dbReference>
<dbReference type="HAMAP" id="MF_04063">
    <property type="entry name" value="INFV_PA"/>
    <property type="match status" value="1"/>
</dbReference>
<dbReference type="InterPro" id="IPR037534">
    <property type="entry name" value="INFV_PA"/>
</dbReference>
<dbReference type="InterPro" id="IPR001009">
    <property type="entry name" value="PA/PA-X"/>
</dbReference>
<dbReference type="InterPro" id="IPR038372">
    <property type="entry name" value="PA/PA-X_sf"/>
</dbReference>
<dbReference type="Pfam" id="PF00603">
    <property type="entry name" value="Flu_PA"/>
    <property type="match status" value="1"/>
</dbReference>
<keyword id="KW-1157">Cap snatching</keyword>
<keyword id="KW-0255">Endonuclease</keyword>
<keyword id="KW-1262">Eukaryotic host gene expression shutoff by virus</keyword>
<keyword id="KW-1191">Eukaryotic host transcription shutoff by virus</keyword>
<keyword id="KW-1035">Host cytoplasm</keyword>
<keyword id="KW-1190">Host gene expression shutoff by virus</keyword>
<keyword id="KW-1048">Host nucleus</keyword>
<keyword id="KW-0945">Host-virus interaction</keyword>
<keyword id="KW-0378">Hydrolase</keyword>
<keyword id="KW-1104">Inhibition of host RNA polymerase II by virus</keyword>
<keyword id="KW-0464">Manganese</keyword>
<keyword id="KW-0479">Metal-binding</keyword>
<keyword id="KW-0540">Nuclease</keyword>
<keyword id="KW-0597">Phosphoprotein</keyword>
<keyword id="KW-0688">Ribosomal frameshifting</keyword>
<comment type="function">
    <text evidence="2">Plays an essential role in viral RNA transcription and replication by forming the heterotrimeric polymerase complex together with PB1 and PB2 subunits. The complex transcribes viral mRNAs by using a unique mechanism called cap-snatching. It consists in the hijacking and cleavage of host capped pre-mRNAs. These short capped RNAs are then used as primers for viral mRNAs. The PB2 subunit is responsible for the binding of the 5' cap of cellular pre-mRNAs which are subsequently cleaved after 10-13 nucleotides by the PA subunit that carries the endonuclease activity.</text>
</comment>
<comment type="cofactor">
    <cofactor evidence="2">
        <name>Mn(2+)</name>
        <dbReference type="ChEBI" id="CHEBI:29035"/>
    </cofactor>
    <text evidence="2">Binds 2 manganese ions per subunit.</text>
</comment>
<comment type="subunit">
    <text evidence="1 2">Influenza RNA polymerase is composed of three subunits: PB1, PB2 and PA. Interacts (via C-terminus) with PB1 (via N-terminus).</text>
</comment>
<comment type="subcellular location">
    <subcellularLocation>
        <location evidence="2">Host cytoplasm</location>
    </subcellularLocation>
    <subcellularLocation>
        <location evidence="2">Host nucleus</location>
    </subcellularLocation>
    <text evidence="1 2">PB1 and PA are transported in the host nucleus as a complex.</text>
</comment>
<comment type="alternative products">
    <event type="ribosomal frameshifting"/>
    <isoform>
        <id>Q2VNE6-1</id>
        <name>PA</name>
        <sequence type="displayed"/>
    </isoform>
    <isoform>
        <id>P0DJT4-1</id>
        <name>PA-X</name>
        <sequence type="external"/>
    </isoform>
</comment>
<comment type="PTM">
    <text evidence="1 2">Phosphorylated on serines and threonines by host kinases, including human casein kinase II.</text>
</comment>
<comment type="similarity">
    <text evidence="2">Belongs to the influenza viruses PA family.</text>
</comment>
<accession>Q2VNE6</accession>
<name>PA_I78A7</name>
<organism>
    <name type="scientific">Influenza A virus (strain A/Memphis/2/1978 H3N2)</name>
    <dbReference type="NCBI Taxonomy" id="383580"/>
    <lineage>
        <taxon>Viruses</taxon>
        <taxon>Riboviria</taxon>
        <taxon>Orthornavirae</taxon>
        <taxon>Negarnaviricota</taxon>
        <taxon>Polyploviricotina</taxon>
        <taxon>Insthoviricetes</taxon>
        <taxon>Articulavirales</taxon>
        <taxon>Orthomyxoviridae</taxon>
        <taxon>Alphainfluenzavirus</taxon>
        <taxon>Alphainfluenzavirus influenzae</taxon>
        <taxon>Influenza A virus</taxon>
    </lineage>
</organism>
<organismHost>
    <name type="scientific">Aves</name>
    <dbReference type="NCBI Taxonomy" id="8782"/>
</organismHost>
<organismHost>
    <name type="scientific">Cetacea</name>
    <name type="common">whales</name>
    <dbReference type="NCBI Taxonomy" id="9721"/>
</organismHost>
<organismHost>
    <name type="scientific">Homo sapiens</name>
    <name type="common">Human</name>
    <dbReference type="NCBI Taxonomy" id="9606"/>
</organismHost>
<organismHost>
    <name type="scientific">Phocidae</name>
    <name type="common">true seals</name>
    <dbReference type="NCBI Taxonomy" id="9709"/>
</organismHost>
<organismHost>
    <name type="scientific">Sus scrofa</name>
    <name type="common">Pig</name>
    <dbReference type="NCBI Taxonomy" id="9823"/>
</organismHost>
<evidence type="ECO:0000250" key="1">
    <source>
        <dbReference type="UniProtKB" id="P03433"/>
    </source>
</evidence>
<evidence type="ECO:0000255" key="2">
    <source>
        <dbReference type="HAMAP-Rule" id="MF_04063"/>
    </source>
</evidence>
<protein>
    <recommendedName>
        <fullName evidence="2">Polymerase acidic protein</fullName>
        <ecNumber evidence="2">3.1.-.-</ecNumber>
    </recommendedName>
    <alternativeName>
        <fullName evidence="2">RNA-directed RNA polymerase subunit P2</fullName>
    </alternativeName>
</protein>
<feature type="chain" id="PRO_0000279254" description="Polymerase acidic protein">
    <location>
        <begin position="1"/>
        <end position="716"/>
    </location>
</feature>
<feature type="short sequence motif" description="Nuclear localization signal 1 (NLS1)" evidence="1 2">
    <location>
        <begin position="124"/>
        <end position="139"/>
    </location>
</feature>
<feature type="short sequence motif" description="Nuclear localization signal 2 (NLS2)" evidence="1 2">
    <location>
        <begin position="184"/>
        <end position="247"/>
    </location>
</feature>
<feature type="binding site" evidence="2">
    <location>
        <position position="41"/>
    </location>
    <ligand>
        <name>Mn(2+)</name>
        <dbReference type="ChEBI" id="CHEBI:29035"/>
        <label>1</label>
    </ligand>
</feature>
<feature type="binding site" evidence="2">
    <location>
        <position position="80"/>
    </location>
    <ligand>
        <name>Mn(2+)</name>
        <dbReference type="ChEBI" id="CHEBI:29035"/>
        <label>2</label>
    </ligand>
</feature>
<feature type="binding site" evidence="2">
    <location>
        <position position="108"/>
    </location>
    <ligand>
        <name>Mn(2+)</name>
        <dbReference type="ChEBI" id="CHEBI:29035"/>
        <label>1</label>
    </ligand>
</feature>
<feature type="binding site" evidence="2">
    <location>
        <position position="108"/>
    </location>
    <ligand>
        <name>Mn(2+)</name>
        <dbReference type="ChEBI" id="CHEBI:29035"/>
        <label>2</label>
    </ligand>
</feature>
<feature type="binding site" evidence="2">
    <location>
        <position position="119"/>
    </location>
    <ligand>
        <name>Mn(2+)</name>
        <dbReference type="ChEBI" id="CHEBI:29035"/>
        <label>1</label>
    </ligand>
</feature>
<feature type="binding site" evidence="2">
    <location>
        <position position="120"/>
    </location>
    <ligand>
        <name>Mn(2+)</name>
        <dbReference type="ChEBI" id="CHEBI:29035"/>
        <label>1</label>
    </ligand>
</feature>
<reference key="1">
    <citation type="submission" date="2005-12" db="EMBL/GenBank/DDBJ databases">
        <title>The NIAID influenza genome sequencing project.</title>
        <authorList>
            <person name="Ghedin E."/>
            <person name="Spiro D."/>
            <person name="Miller N."/>
            <person name="Zaborsky J."/>
            <person name="Feldblyum T."/>
            <person name="Subbu V."/>
            <person name="Shumway M."/>
            <person name="Sparenborg J."/>
            <person name="Groveman L."/>
            <person name="Halpin R."/>
            <person name="Sitz J."/>
            <person name="Koo H."/>
            <person name="Salzberg S.L."/>
            <person name="Webster R.G."/>
            <person name="Hoffmann E."/>
            <person name="Krauss S."/>
            <person name="Naeve C."/>
            <person name="Bao Y."/>
            <person name="Bolotov P."/>
            <person name="Dernovoy D."/>
            <person name="Kiryutin B."/>
            <person name="Lipman D.J."/>
            <person name="Tatusova T."/>
        </authorList>
    </citation>
    <scope>NUCLEOTIDE SEQUENCE [GENOMIC RNA]</scope>
</reference>